<sequence>MSRIGRLPIEIPKGVEVKVTPDNVVTVKGSKGTLEKKFPPIVNIEVKDNQVIVTRKGDDKEEKAMHGTTRAIIANMVKGVTEGFEKALEIVGIGYRAAKQGKKLVLNVGYSHPVEIEEKPGIEIIVEGNNKIIVRGIDKEKVGQVAANIRRVREPDAYQGKGIRYAGEVVRLKEGKTGKK</sequence>
<accession>B0K5Q8</accession>
<reference key="1">
    <citation type="submission" date="2008-01" db="EMBL/GenBank/DDBJ databases">
        <title>Complete sequence of Thermoanaerobacter sp. X514.</title>
        <authorList>
            <consortium name="US DOE Joint Genome Institute"/>
            <person name="Copeland A."/>
            <person name="Lucas S."/>
            <person name="Lapidus A."/>
            <person name="Barry K."/>
            <person name="Glavina del Rio T."/>
            <person name="Dalin E."/>
            <person name="Tice H."/>
            <person name="Pitluck S."/>
            <person name="Bruce D."/>
            <person name="Goodwin L."/>
            <person name="Saunders E."/>
            <person name="Brettin T."/>
            <person name="Detter J.C."/>
            <person name="Han C."/>
            <person name="Schmutz J."/>
            <person name="Larimer F."/>
            <person name="Land M."/>
            <person name="Hauser L."/>
            <person name="Kyrpides N."/>
            <person name="Kim E."/>
            <person name="Hemme C."/>
            <person name="Fields M.W."/>
            <person name="He Z."/>
            <person name="Zhou J."/>
            <person name="Richardson P."/>
        </authorList>
    </citation>
    <scope>NUCLEOTIDE SEQUENCE [LARGE SCALE GENOMIC DNA]</scope>
    <source>
        <strain>X514</strain>
    </source>
</reference>
<name>RL6_THEPX</name>
<feature type="chain" id="PRO_1000144063" description="Large ribosomal subunit protein uL6">
    <location>
        <begin position="1"/>
        <end position="180"/>
    </location>
</feature>
<keyword id="KW-0687">Ribonucleoprotein</keyword>
<keyword id="KW-0689">Ribosomal protein</keyword>
<keyword id="KW-0694">RNA-binding</keyword>
<keyword id="KW-0699">rRNA-binding</keyword>
<dbReference type="EMBL" id="CP000923">
    <property type="protein sequence ID" value="ABY92184.1"/>
    <property type="molecule type" value="Genomic_DNA"/>
</dbReference>
<dbReference type="RefSeq" id="WP_003868575.1">
    <property type="nucleotide sequence ID" value="NC_010320.1"/>
</dbReference>
<dbReference type="SMR" id="B0K5Q8"/>
<dbReference type="KEGG" id="tex:Teth514_0882"/>
<dbReference type="HOGENOM" id="CLU_065464_1_2_9"/>
<dbReference type="Proteomes" id="UP000002155">
    <property type="component" value="Chromosome"/>
</dbReference>
<dbReference type="GO" id="GO:0022625">
    <property type="term" value="C:cytosolic large ribosomal subunit"/>
    <property type="evidence" value="ECO:0007669"/>
    <property type="project" value="TreeGrafter"/>
</dbReference>
<dbReference type="GO" id="GO:0019843">
    <property type="term" value="F:rRNA binding"/>
    <property type="evidence" value="ECO:0007669"/>
    <property type="project" value="UniProtKB-UniRule"/>
</dbReference>
<dbReference type="GO" id="GO:0003735">
    <property type="term" value="F:structural constituent of ribosome"/>
    <property type="evidence" value="ECO:0007669"/>
    <property type="project" value="InterPro"/>
</dbReference>
<dbReference type="GO" id="GO:0002181">
    <property type="term" value="P:cytoplasmic translation"/>
    <property type="evidence" value="ECO:0007669"/>
    <property type="project" value="TreeGrafter"/>
</dbReference>
<dbReference type="FunFam" id="3.90.930.12:FF:000001">
    <property type="entry name" value="50S ribosomal protein L6"/>
    <property type="match status" value="1"/>
</dbReference>
<dbReference type="FunFam" id="3.90.930.12:FF:000002">
    <property type="entry name" value="50S ribosomal protein L6"/>
    <property type="match status" value="1"/>
</dbReference>
<dbReference type="Gene3D" id="3.90.930.12">
    <property type="entry name" value="Ribosomal protein L6, alpha-beta domain"/>
    <property type="match status" value="2"/>
</dbReference>
<dbReference type="HAMAP" id="MF_01365_B">
    <property type="entry name" value="Ribosomal_uL6_B"/>
    <property type="match status" value="1"/>
</dbReference>
<dbReference type="InterPro" id="IPR000702">
    <property type="entry name" value="Ribosomal_uL6-like"/>
</dbReference>
<dbReference type="InterPro" id="IPR036789">
    <property type="entry name" value="Ribosomal_uL6-like_a/b-dom_sf"/>
</dbReference>
<dbReference type="InterPro" id="IPR020040">
    <property type="entry name" value="Ribosomal_uL6_a/b-dom"/>
</dbReference>
<dbReference type="InterPro" id="IPR019906">
    <property type="entry name" value="Ribosomal_uL6_bac-type"/>
</dbReference>
<dbReference type="NCBIfam" id="TIGR03654">
    <property type="entry name" value="L6_bact"/>
    <property type="match status" value="1"/>
</dbReference>
<dbReference type="PANTHER" id="PTHR11655">
    <property type="entry name" value="60S/50S RIBOSOMAL PROTEIN L6/L9"/>
    <property type="match status" value="1"/>
</dbReference>
<dbReference type="PANTHER" id="PTHR11655:SF14">
    <property type="entry name" value="LARGE RIBOSOMAL SUBUNIT PROTEIN UL6M"/>
    <property type="match status" value="1"/>
</dbReference>
<dbReference type="Pfam" id="PF00347">
    <property type="entry name" value="Ribosomal_L6"/>
    <property type="match status" value="2"/>
</dbReference>
<dbReference type="PIRSF" id="PIRSF002162">
    <property type="entry name" value="Ribosomal_L6"/>
    <property type="match status" value="1"/>
</dbReference>
<dbReference type="PRINTS" id="PR00059">
    <property type="entry name" value="RIBOSOMALL6"/>
</dbReference>
<dbReference type="SUPFAM" id="SSF56053">
    <property type="entry name" value="Ribosomal protein L6"/>
    <property type="match status" value="2"/>
</dbReference>
<protein>
    <recommendedName>
        <fullName evidence="1">Large ribosomal subunit protein uL6</fullName>
    </recommendedName>
    <alternativeName>
        <fullName evidence="2">50S ribosomal protein L6</fullName>
    </alternativeName>
</protein>
<organism>
    <name type="scientific">Thermoanaerobacter sp. (strain X514)</name>
    <dbReference type="NCBI Taxonomy" id="399726"/>
    <lineage>
        <taxon>Bacteria</taxon>
        <taxon>Bacillati</taxon>
        <taxon>Bacillota</taxon>
        <taxon>Clostridia</taxon>
        <taxon>Thermoanaerobacterales</taxon>
        <taxon>Thermoanaerobacteraceae</taxon>
        <taxon>Thermoanaerobacter</taxon>
    </lineage>
</organism>
<evidence type="ECO:0000255" key="1">
    <source>
        <dbReference type="HAMAP-Rule" id="MF_01365"/>
    </source>
</evidence>
<evidence type="ECO:0000305" key="2"/>
<gene>
    <name evidence="1" type="primary">rplF</name>
    <name type="ordered locus">Teth514_0882</name>
</gene>
<proteinExistence type="inferred from homology"/>
<comment type="function">
    <text evidence="1">This protein binds to the 23S rRNA, and is important in its secondary structure. It is located near the subunit interface in the base of the L7/L12 stalk, and near the tRNA binding site of the peptidyltransferase center.</text>
</comment>
<comment type="subunit">
    <text evidence="1">Part of the 50S ribosomal subunit.</text>
</comment>
<comment type="similarity">
    <text evidence="1">Belongs to the universal ribosomal protein uL6 family.</text>
</comment>